<organism>
    <name type="scientific">Microbacterium luteolum</name>
    <name type="common">Aureobacterium luteolum</name>
    <dbReference type="NCBI Taxonomy" id="69367"/>
    <lineage>
        <taxon>Bacteria</taxon>
        <taxon>Bacillati</taxon>
        <taxon>Actinomycetota</taxon>
        <taxon>Actinomycetes</taxon>
        <taxon>Micrococcales</taxon>
        <taxon>Microbacteriaceae</taxon>
        <taxon>Microbacterium</taxon>
    </lineage>
</organism>
<comment type="catalytic activity">
    <reaction>
        <text>pyridoxal + NAD(+) = 4-pyridoxolactone + NADH + H(+)</text>
        <dbReference type="Rhea" id="RHEA:21336"/>
        <dbReference type="ChEBI" id="CHEBI:15378"/>
        <dbReference type="ChEBI" id="CHEBI:16871"/>
        <dbReference type="ChEBI" id="CHEBI:17310"/>
        <dbReference type="ChEBI" id="CHEBI:57540"/>
        <dbReference type="ChEBI" id="CHEBI:57945"/>
        <dbReference type="EC" id="1.1.1.107"/>
    </reaction>
</comment>
<comment type="biophysicochemical properties">
    <kinetics>
        <KM evidence="2">13 mM for pyridoxal</KM>
        <KM evidence="2">0.41 mM for L-fucose</KM>
        <KM evidence="2">0.91 mM for D-arabinose</KM>
        <KM evidence="2">3.5 mM for L-xylose</KM>
        <KM evidence="2">0.042 uM for NAD with L-fucose as hydrogen donor</KM>
        <KM evidence="2">0.05 uM for NAD with pyridoxal as hydrogen donor</KM>
        <KM evidence="2">0.58 mM for NADP with L-fucose as hydrogen donor</KM>
    </kinetics>
    <phDependence>
        <text evidence="2">Optimum pH is 8.0 with pyridoxal as substrate (9.5 with L-fucose as substrate).</text>
    </phDependence>
    <temperatureDependence>
        <text evidence="2">Optimum temperature is 30 degrees Celsius.</text>
    </temperatureDependence>
</comment>
<comment type="pathway">
    <text>Cofactor degradation; B6 vitamer degradation; 4-pyridoxate from pyridoxal: step 1/2.</text>
</comment>
<comment type="subunit">
    <text>Homodimer.</text>
</comment>
<comment type="similarity">
    <text evidence="3">Belongs to the aldo/keto reductase family.</text>
</comment>
<evidence type="ECO:0000250" key="1"/>
<evidence type="ECO:0000269" key="2">
    <source>
    </source>
</evidence>
<evidence type="ECO:0000305" key="3"/>
<dbReference type="EC" id="1.1.1.107"/>
<dbReference type="EMBL" id="AB092836">
    <property type="protein sequence ID" value="BAC97800.1"/>
    <property type="molecule type" value="Genomic_DNA"/>
</dbReference>
<dbReference type="SMR" id="Q76KC2"/>
<dbReference type="BRENDA" id="1.1.1.107">
    <property type="organism ID" value="7273"/>
</dbReference>
<dbReference type="SABIO-RK" id="Q76KC2"/>
<dbReference type="UniPathway" id="UPA00192">
    <property type="reaction ID" value="UER00588"/>
</dbReference>
<dbReference type="GO" id="GO:0005829">
    <property type="term" value="C:cytosol"/>
    <property type="evidence" value="ECO:0007669"/>
    <property type="project" value="TreeGrafter"/>
</dbReference>
<dbReference type="GO" id="GO:0050235">
    <property type="term" value="F:pyridoxal 4-dehydrogenase activity"/>
    <property type="evidence" value="ECO:0007669"/>
    <property type="project" value="UniProtKB-EC"/>
</dbReference>
<dbReference type="GO" id="GO:0042820">
    <property type="term" value="P:vitamin B6 catabolic process"/>
    <property type="evidence" value="ECO:0007669"/>
    <property type="project" value="UniProtKB-UniPathway"/>
</dbReference>
<dbReference type="CDD" id="cd19161">
    <property type="entry name" value="AKR_AKR15A1"/>
    <property type="match status" value="1"/>
</dbReference>
<dbReference type="Gene3D" id="3.20.20.100">
    <property type="entry name" value="NADP-dependent oxidoreductase domain"/>
    <property type="match status" value="1"/>
</dbReference>
<dbReference type="InterPro" id="IPR020471">
    <property type="entry name" value="AKR"/>
</dbReference>
<dbReference type="InterPro" id="IPR023210">
    <property type="entry name" value="NADP_OxRdtase_dom"/>
</dbReference>
<dbReference type="InterPro" id="IPR036812">
    <property type="entry name" value="NADP_OxRdtase_dom_sf"/>
</dbReference>
<dbReference type="InterPro" id="IPR044478">
    <property type="entry name" value="Pld1-like"/>
</dbReference>
<dbReference type="PANTHER" id="PTHR42686">
    <property type="entry name" value="GH17980P-RELATED"/>
    <property type="match status" value="1"/>
</dbReference>
<dbReference type="PANTHER" id="PTHR42686:SF1">
    <property type="entry name" value="GH17980P-RELATED"/>
    <property type="match status" value="1"/>
</dbReference>
<dbReference type="Pfam" id="PF00248">
    <property type="entry name" value="Aldo_ket_red"/>
    <property type="match status" value="1"/>
</dbReference>
<dbReference type="SUPFAM" id="SSF51430">
    <property type="entry name" value="NAD(P)-linked oxidoreductase"/>
    <property type="match status" value="1"/>
</dbReference>
<keyword id="KW-0903">Direct protein sequencing</keyword>
<keyword id="KW-0520">NAD</keyword>
<keyword id="KW-0560">Oxidoreductase</keyword>
<name>PLD_MICLT</name>
<reference key="1">
    <citation type="journal article" date="2004" name="J. Biol. Chem.">
        <title>Molecular cloning, expression, and properties of an unusual aldo-keto reductase family enzyme, pyridoxal 4-dehydrogenase, that catalyzes irreversible oxidation of pyridoxal.</title>
        <authorList>
            <person name="Yokochi N."/>
            <person name="Yoshikane Y."/>
            <person name="Trongpanich Y."/>
            <person name="Ohnishi K."/>
            <person name="Yagi T."/>
        </authorList>
    </citation>
    <scope>NUCLEOTIDE SEQUENCE [GENOMIC DNA]</scope>
    <scope>PROTEIN SEQUENCE OF 2-18; 164-180; 231-265 AND 285-301</scope>
    <scope>CHARACTERIZATION</scope>
    <scope>BIOPHYSICOCHEMICAL PROPERTIES</scope>
    <source>
        <strain>YK-1</strain>
    </source>
</reference>
<feature type="initiator methionine" description="Removed" evidence="2">
    <location>
        <position position="1"/>
    </location>
</feature>
<feature type="chain" id="PRO_0000124682" description="Pyridoxal 4-dehydrogenase">
    <location>
        <begin position="2"/>
        <end position="342"/>
    </location>
</feature>
<feature type="active site" evidence="1">
    <location>
        <position position="56"/>
    </location>
</feature>
<feature type="active site" description="Proton donor" evidence="1">
    <location>
        <position position="61"/>
    </location>
</feature>
<feature type="active site" evidence="1">
    <location>
        <position position="86"/>
    </location>
</feature>
<feature type="binding site" evidence="1">
    <location>
        <begin position="245"/>
        <end position="255"/>
    </location>
    <ligand>
        <name>NADP(+)</name>
        <dbReference type="ChEBI" id="CHEBI:58349"/>
    </ligand>
</feature>
<protein>
    <recommendedName>
        <fullName>Pyridoxal 4-dehydrogenase</fullName>
        <ecNumber>1.1.1.107</ecNumber>
    </recommendedName>
</protein>
<gene>
    <name type="primary">pld1</name>
</gene>
<accession>Q76KC2</accession>
<sequence length="342" mass="37890">MHLKASEKRALGRTGLTVTALGLGTAPLGGLYAPVSRADADALLEAGWDSGIRYFDSAPMYGYGRCEHLLGDMLREKPERAVISTKVGRLMTNERAGRTLPPAPPKNPLDSGWHNGLNFREVFDYSYDGVMRSFDDSQQRLGFPEIDLLYVHDIGRVTHADRHEFHWNALTRGGGFRALTELRAAGNIKGFGLGVNEWQIIRDALEEADLDCSLLAGRYSLLDQVSEKEFLPLAQKRGMALVIAGVFNSGILAAPRGGEQKFDYADAPAEIIARTNRLHDICDEYHVPLAAAAMQFPLRHEAVSSILIGVRSPEQIRQNVVWFEQSIPDEFWTTLRSEGLIS</sequence>
<proteinExistence type="evidence at protein level"/>